<evidence type="ECO:0000250" key="1">
    <source>
        <dbReference type="UniProtKB" id="P00420"/>
    </source>
</evidence>
<evidence type="ECO:0000255" key="2"/>
<evidence type="ECO:0000305" key="3"/>
<reference key="1">
    <citation type="journal article" date="1994" name="J. Mol. Biol.">
        <title>Complete sequence of the mitochondrial DNA of the chlorophyte alga Prototheca wickerhamii. Gene content and genome organization.</title>
        <authorList>
            <person name="Wolff G."/>
            <person name="Plante I."/>
            <person name="Lang B.F."/>
            <person name="Kueck U."/>
            <person name="Burger G."/>
        </authorList>
    </citation>
    <scope>NUCLEOTIDE SEQUENCE [GENOMIC DNA]</scope>
    <source>
        <strain>263-11</strain>
    </source>
</reference>
<geneLocation type="mitochondrion"/>
<organism>
    <name type="scientific">Prototheca wickerhamii</name>
    <dbReference type="NCBI Taxonomy" id="3111"/>
    <lineage>
        <taxon>Eukaryota</taxon>
        <taxon>Viridiplantae</taxon>
        <taxon>Chlorophyta</taxon>
        <taxon>core chlorophytes</taxon>
        <taxon>Trebouxiophyceae</taxon>
        <taxon>Chlorellales</taxon>
        <taxon>Chlorellaceae</taxon>
        <taxon>Prototheca</taxon>
    </lineage>
</organism>
<proteinExistence type="inferred from homology"/>
<keyword id="KW-0472">Membrane</keyword>
<keyword id="KW-0496">Mitochondrion</keyword>
<keyword id="KW-0999">Mitochondrion inner membrane</keyword>
<keyword id="KW-1278">Translocase</keyword>
<keyword id="KW-0812">Transmembrane</keyword>
<keyword id="KW-1133">Transmembrane helix</keyword>
<gene>
    <name type="primary">COX3</name>
</gene>
<feature type="chain" id="PRO_0000183839" description="Cytochrome c oxidase subunit 3">
    <location>
        <begin position="1"/>
        <end position="262"/>
    </location>
</feature>
<feature type="transmembrane region" description="Helical" evidence="2">
    <location>
        <begin position="13"/>
        <end position="33"/>
    </location>
</feature>
<feature type="transmembrane region" description="Helical" evidence="2">
    <location>
        <begin position="38"/>
        <end position="58"/>
    </location>
</feature>
<feature type="transmembrane region" description="Helical" evidence="2">
    <location>
        <begin position="82"/>
        <end position="102"/>
    </location>
</feature>
<feature type="transmembrane region" description="Helical" evidence="2">
    <location>
        <begin position="134"/>
        <end position="154"/>
    </location>
</feature>
<feature type="transmembrane region" description="Helical" evidence="2">
    <location>
        <begin position="159"/>
        <end position="179"/>
    </location>
</feature>
<feature type="transmembrane region" description="Helical" evidence="2">
    <location>
        <begin position="200"/>
        <end position="220"/>
    </location>
</feature>
<feature type="transmembrane region" description="Helical" evidence="2">
    <location>
        <begin position="237"/>
        <end position="257"/>
    </location>
</feature>
<comment type="function">
    <text evidence="1">Component of the cytochrome c oxidase, the last enzyme in the mitochondrial electron transport chain which drives oxidative phosphorylation. The respiratory chain contains 3 multisubunit complexes succinate dehydrogenase (complex II, CII), ubiquinol-cytochrome c oxidoreductase (cytochrome b-c1 complex, complex III, CIII) and cytochrome c oxidase (complex IV, CIV), that cooperate to transfer electrons derived from NADH and succinate to molecular oxygen, creating an electrochemical gradient over the inner membrane that drives transmembrane transport and the ATP synthase. Cytochrome c oxidase is the component of the respiratory chain that catalyzes the reduction of oxygen to water. Electrons originating from reduced cytochrome c in the intermembrane space (IMS) are transferred via the dinuclear copper A center (CU(A)) of subunit 2 and heme A of subunit 1 to the active site in subunit 1, a binuclear center (BNC) formed by heme A3 and copper B (CU(B)). The BNC reduces molecular oxygen to 2 water molecules using 4 electrons from cytochrome c in the IMS and 4 protons from the mitochondrial matrix.</text>
</comment>
<comment type="catalytic activity">
    <reaction evidence="1">
        <text>4 Fe(II)-[cytochrome c] + O2 + 8 H(+)(in) = 4 Fe(III)-[cytochrome c] + 2 H2O + 4 H(+)(out)</text>
        <dbReference type="Rhea" id="RHEA:11436"/>
        <dbReference type="Rhea" id="RHEA-COMP:10350"/>
        <dbReference type="Rhea" id="RHEA-COMP:14399"/>
        <dbReference type="ChEBI" id="CHEBI:15377"/>
        <dbReference type="ChEBI" id="CHEBI:15378"/>
        <dbReference type="ChEBI" id="CHEBI:15379"/>
        <dbReference type="ChEBI" id="CHEBI:29033"/>
        <dbReference type="ChEBI" id="CHEBI:29034"/>
        <dbReference type="EC" id="7.1.1.9"/>
    </reaction>
    <physiologicalReaction direction="left-to-right" evidence="1">
        <dbReference type="Rhea" id="RHEA:11437"/>
    </physiologicalReaction>
</comment>
<comment type="subunit">
    <text evidence="1">Component of the cytochrome c oxidase (complex IV, CIV), a multisubunit enzyme composed of a catalytic core of 3 subunits and several supernumerary subunits. The complex exists as a monomer or a dimer and forms supercomplexes (SCs) in the inner mitochondrial membrane with ubiquinol-cytochrome c oxidoreductase (cytochrome b-c1 complex, complex III, CIII).</text>
</comment>
<comment type="subcellular location">
    <subcellularLocation>
        <location evidence="1">Mitochondrion inner membrane</location>
        <topology evidence="1">Multi-pass membrane protein</topology>
    </subcellularLocation>
</comment>
<comment type="similarity">
    <text evidence="3">Belongs to the cytochrome c oxidase subunit 3 family.</text>
</comment>
<name>COX3_PROWI</name>
<sequence length="262" mass="29600">MRKHPFHLVDPSPWPLLASFAAFLSTTGGVMYMHAYSGGGLLLAIGQLSLFYVMYVWWRDVIREGTYQGHHTNPVQVGLRYGMLLFILSEIMFFFAFFWAFFHSSLAPTIEIGAVWPPKGIQVLNPWEIPFLNTIILLTSGASVTWAHHAILAGNRKQGIISLAITVLLAVIFTGFQALEYLEAPFTISDGIYGSTFYLATGFHGFHVIIGTIFIAVCLFRLVLHHFSKSHHLGFEAAAWYWHMVDVVWLFLFVCIYYWGGA</sequence>
<accession>Q37620</accession>
<protein>
    <recommendedName>
        <fullName>Cytochrome c oxidase subunit 3</fullName>
        <ecNumber>7.1.1.9</ecNumber>
    </recommendedName>
    <alternativeName>
        <fullName>Cytochrome c oxidase polypeptide III</fullName>
    </alternativeName>
</protein>
<dbReference type="EC" id="7.1.1.9"/>
<dbReference type="EMBL" id="U02970">
    <property type="protein sequence ID" value="AAD12641.1"/>
    <property type="molecule type" value="Genomic_DNA"/>
</dbReference>
<dbReference type="PIR" id="T11922">
    <property type="entry name" value="T11922"/>
</dbReference>
<dbReference type="RefSeq" id="NP_042253.1">
    <property type="nucleotide sequence ID" value="NC_001613.1"/>
</dbReference>
<dbReference type="SMR" id="Q37620"/>
<dbReference type="GeneID" id="802127"/>
<dbReference type="GO" id="GO:0005743">
    <property type="term" value="C:mitochondrial inner membrane"/>
    <property type="evidence" value="ECO:0007669"/>
    <property type="project" value="UniProtKB-SubCell"/>
</dbReference>
<dbReference type="GO" id="GO:0004129">
    <property type="term" value="F:cytochrome-c oxidase activity"/>
    <property type="evidence" value="ECO:0007669"/>
    <property type="project" value="UniProtKB-EC"/>
</dbReference>
<dbReference type="GO" id="GO:0006123">
    <property type="term" value="P:mitochondrial electron transport, cytochrome c to oxygen"/>
    <property type="evidence" value="ECO:0007669"/>
    <property type="project" value="TreeGrafter"/>
</dbReference>
<dbReference type="CDD" id="cd01665">
    <property type="entry name" value="Cyt_c_Oxidase_III"/>
    <property type="match status" value="1"/>
</dbReference>
<dbReference type="FunFam" id="1.10.287.70:FF:000082">
    <property type="entry name" value="Cytochrome c oxidase subunit 3"/>
    <property type="match status" value="1"/>
</dbReference>
<dbReference type="FunFam" id="1.20.120.80:FF:000002">
    <property type="entry name" value="Cytochrome c oxidase subunit 3"/>
    <property type="match status" value="1"/>
</dbReference>
<dbReference type="Gene3D" id="1.10.287.70">
    <property type="match status" value="1"/>
</dbReference>
<dbReference type="Gene3D" id="1.20.120.80">
    <property type="entry name" value="Cytochrome c oxidase, subunit III, four-helix bundle"/>
    <property type="match status" value="1"/>
</dbReference>
<dbReference type="InterPro" id="IPR024791">
    <property type="entry name" value="Cyt_c/ubiquinol_Oxase_su3"/>
</dbReference>
<dbReference type="InterPro" id="IPR033945">
    <property type="entry name" value="Cyt_c_oxase_su3_dom"/>
</dbReference>
<dbReference type="InterPro" id="IPR000298">
    <property type="entry name" value="Cyt_c_oxidase-like_su3"/>
</dbReference>
<dbReference type="InterPro" id="IPR035973">
    <property type="entry name" value="Cyt_c_oxidase_su3-like_sf"/>
</dbReference>
<dbReference type="InterPro" id="IPR013833">
    <property type="entry name" value="Cyt_c_oxidase_su3_a-hlx"/>
</dbReference>
<dbReference type="PANTHER" id="PTHR11403:SF7">
    <property type="entry name" value="CYTOCHROME C OXIDASE SUBUNIT 3"/>
    <property type="match status" value="1"/>
</dbReference>
<dbReference type="PANTHER" id="PTHR11403">
    <property type="entry name" value="CYTOCHROME C OXIDASE SUBUNIT III"/>
    <property type="match status" value="1"/>
</dbReference>
<dbReference type="Pfam" id="PF00510">
    <property type="entry name" value="COX3"/>
    <property type="match status" value="1"/>
</dbReference>
<dbReference type="SUPFAM" id="SSF81452">
    <property type="entry name" value="Cytochrome c oxidase subunit III-like"/>
    <property type="match status" value="1"/>
</dbReference>
<dbReference type="PROSITE" id="PS50253">
    <property type="entry name" value="COX3"/>
    <property type="match status" value="1"/>
</dbReference>